<keyword id="KW-0997">Cell inner membrane</keyword>
<keyword id="KW-1003">Cell membrane</keyword>
<keyword id="KW-0406">Ion transport</keyword>
<keyword id="KW-0472">Membrane</keyword>
<keyword id="KW-1185">Reference proteome</keyword>
<keyword id="KW-0812">Transmembrane</keyword>
<keyword id="KW-1133">Transmembrane helix</keyword>
<keyword id="KW-0813">Transport</keyword>
<name>CMPB_SYNY3</name>
<feature type="chain" id="PRO_0000341962" description="Bicarbonate transport system permease protein CmpB">
    <location>
        <begin position="1"/>
        <end position="280"/>
    </location>
</feature>
<feature type="transmembrane region" description="Helical" evidence="2">
    <location>
        <begin position="32"/>
        <end position="52"/>
    </location>
</feature>
<feature type="transmembrane region" description="Helical" evidence="2">
    <location>
        <begin position="99"/>
        <end position="119"/>
    </location>
</feature>
<feature type="transmembrane region" description="Helical" evidence="2">
    <location>
        <begin position="126"/>
        <end position="146"/>
    </location>
</feature>
<feature type="transmembrane region" description="Helical" evidence="2">
    <location>
        <begin position="153"/>
        <end position="173"/>
    </location>
</feature>
<feature type="transmembrane region" description="Helical" evidence="2">
    <location>
        <begin position="198"/>
        <end position="218"/>
    </location>
</feature>
<feature type="transmembrane region" description="Helical" evidence="2">
    <location>
        <begin position="219"/>
        <end position="239"/>
    </location>
</feature>
<feature type="transmembrane region" description="Helical" evidence="2">
    <location>
        <begin position="251"/>
        <end position="271"/>
    </location>
</feature>
<feature type="domain" description="ABC transmembrane type-1" evidence="2">
    <location>
        <begin position="88"/>
        <end position="266"/>
    </location>
</feature>
<accession>Q55461</accession>
<protein>
    <recommendedName>
        <fullName>Bicarbonate transport system permease protein CmpB</fullName>
    </recommendedName>
</protein>
<comment type="function">
    <text evidence="1">Part of the ABC transporter complex CmpABCD involved in bicarbonate transport. Probably responsible for the translocation of the substrate across the membrane (By similarity).</text>
</comment>
<comment type="subunit">
    <text evidence="1">The complex is composed of two ATP-binding proteins (CmpC and CmpD), a transmembrane protein (CmpB) and a solute-binding protein (CmpA).</text>
</comment>
<comment type="subcellular location">
    <subcellularLocation>
        <location evidence="3">Cell inner membrane</location>
        <topology evidence="2">Multi-pass membrane protein</topology>
    </subcellularLocation>
</comment>
<comment type="induction">
    <text>By carbon dioxide-limited conditions, probably via CmpR.</text>
</comment>
<comment type="similarity">
    <text evidence="3">Belongs to the binding-protein-dependent transport system permease family.</text>
</comment>
<evidence type="ECO:0000250" key="1"/>
<evidence type="ECO:0000255" key="2">
    <source>
        <dbReference type="PROSITE-ProRule" id="PRU00441"/>
    </source>
</evidence>
<evidence type="ECO:0000305" key="3"/>
<sequence length="280" mass="31023">MTTTISQRKNRAAGANPLQKFWRKRRGDILPPIFGILGFLLLWQLISSAGLIKLPPPSSLWTDPRTRTLLMYPFYDQGGLDKGLFWQTLASLGRVAQGYSLAAIVGISTGILVGTQPLLDKALDPIFQFLRMVAPLAWVPIALVALQQNQPAAIFVIFITSVWPILINTTEGVKQIPQDYINVRKVLRLSPQKFFFKILIPSALPYIFTGLRIAIGLAWLAIIAAEIVMSGIVGIGFFIWDAYQQNYISEIILAVFYIGAVGLLLDRGIAYLQKLIAPGQ</sequence>
<reference key="1">
    <citation type="journal article" date="1996" name="DNA Res.">
        <title>Sequence analysis of the genome of the unicellular cyanobacterium Synechocystis sp. strain PCC6803. II. Sequence determination of the entire genome and assignment of potential protein-coding regions.</title>
        <authorList>
            <person name="Kaneko T."/>
            <person name="Sato S."/>
            <person name="Kotani H."/>
            <person name="Tanaka A."/>
            <person name="Asamizu E."/>
            <person name="Nakamura Y."/>
            <person name="Miyajima N."/>
            <person name="Hirosawa M."/>
            <person name="Sugiura M."/>
            <person name="Sasamoto S."/>
            <person name="Kimura T."/>
            <person name="Hosouchi T."/>
            <person name="Matsuno A."/>
            <person name="Muraki A."/>
            <person name="Nakazaki N."/>
            <person name="Naruo K."/>
            <person name="Okumura S."/>
            <person name="Shimpo S."/>
            <person name="Takeuchi C."/>
            <person name="Wada T."/>
            <person name="Watanabe A."/>
            <person name="Yamada M."/>
            <person name="Yasuda M."/>
            <person name="Tabata S."/>
        </authorList>
    </citation>
    <scope>NUCLEOTIDE SEQUENCE [LARGE SCALE GENOMIC DNA]</scope>
    <source>
        <strain>ATCC 27184 / PCC 6803 / Kazusa</strain>
    </source>
</reference>
<reference key="2">
    <citation type="journal article" date="2001" name="J. Bacteriol.">
        <title>Involvement of a CbbR homolog in low CO2-induced activation of the bicarbonate transporter operon in cyanobacteria.</title>
        <authorList>
            <person name="Omata T."/>
            <person name="Gohta S."/>
            <person name="Takahashi Y."/>
            <person name="Harano Y."/>
            <person name="Maeda S."/>
        </authorList>
    </citation>
    <scope>REGULATION BY CMPR</scope>
</reference>
<dbReference type="EMBL" id="BA000022">
    <property type="protein sequence ID" value="BAA10804.1"/>
    <property type="molecule type" value="Genomic_DNA"/>
</dbReference>
<dbReference type="PIR" id="S75957">
    <property type="entry name" value="S75957"/>
</dbReference>
<dbReference type="SMR" id="Q55461"/>
<dbReference type="FunCoup" id="Q55461">
    <property type="interactions" value="225"/>
</dbReference>
<dbReference type="STRING" id="1148.gene:10500308"/>
<dbReference type="PaxDb" id="1148-1001317"/>
<dbReference type="EnsemblBacteria" id="BAA10804">
    <property type="protein sequence ID" value="BAA10804"/>
    <property type="gene ID" value="BAA10804"/>
</dbReference>
<dbReference type="KEGG" id="syn:slr0041"/>
<dbReference type="eggNOG" id="COG0600">
    <property type="taxonomic scope" value="Bacteria"/>
</dbReference>
<dbReference type="InParanoid" id="Q55461"/>
<dbReference type="PhylomeDB" id="Q55461"/>
<dbReference type="Proteomes" id="UP000001425">
    <property type="component" value="Chromosome"/>
</dbReference>
<dbReference type="GO" id="GO:0005886">
    <property type="term" value="C:plasma membrane"/>
    <property type="evidence" value="ECO:0000318"/>
    <property type="project" value="GO_Central"/>
</dbReference>
<dbReference type="GO" id="GO:0015112">
    <property type="term" value="F:nitrate transmembrane transporter activity"/>
    <property type="evidence" value="ECO:0007669"/>
    <property type="project" value="InterPro"/>
</dbReference>
<dbReference type="GO" id="GO:0006811">
    <property type="term" value="P:monoatomic ion transport"/>
    <property type="evidence" value="ECO:0007669"/>
    <property type="project" value="UniProtKB-KW"/>
</dbReference>
<dbReference type="CDD" id="cd06261">
    <property type="entry name" value="TM_PBP2"/>
    <property type="match status" value="1"/>
</dbReference>
<dbReference type="FunFam" id="1.10.3720.10:FF:000003">
    <property type="entry name" value="Aliphatic sulfonate ABC transporter permease"/>
    <property type="match status" value="1"/>
</dbReference>
<dbReference type="Gene3D" id="1.10.3720.10">
    <property type="entry name" value="MetI-like"/>
    <property type="match status" value="1"/>
</dbReference>
<dbReference type="InterPro" id="IPR000515">
    <property type="entry name" value="MetI-like"/>
</dbReference>
<dbReference type="InterPro" id="IPR035906">
    <property type="entry name" value="MetI-like_sf"/>
</dbReference>
<dbReference type="InterPro" id="IPR005889">
    <property type="entry name" value="NtrB"/>
</dbReference>
<dbReference type="NCBIfam" id="TIGR01183">
    <property type="entry name" value="ntrB"/>
    <property type="match status" value="1"/>
</dbReference>
<dbReference type="PANTHER" id="PTHR30151">
    <property type="entry name" value="ALKANE SULFONATE ABC TRANSPORTER-RELATED, MEMBRANE SUBUNIT"/>
    <property type="match status" value="1"/>
</dbReference>
<dbReference type="PANTHER" id="PTHR30151:SF7">
    <property type="entry name" value="NITRATE IMPORT PERMEASE PROTEIN NRTB"/>
    <property type="match status" value="1"/>
</dbReference>
<dbReference type="Pfam" id="PF00528">
    <property type="entry name" value="BPD_transp_1"/>
    <property type="match status" value="1"/>
</dbReference>
<dbReference type="SUPFAM" id="SSF161098">
    <property type="entry name" value="MetI-like"/>
    <property type="match status" value="1"/>
</dbReference>
<dbReference type="PROSITE" id="PS50928">
    <property type="entry name" value="ABC_TM1"/>
    <property type="match status" value="1"/>
</dbReference>
<proteinExistence type="evidence at transcript level"/>
<organism>
    <name type="scientific">Synechocystis sp. (strain ATCC 27184 / PCC 6803 / Kazusa)</name>
    <dbReference type="NCBI Taxonomy" id="1111708"/>
    <lineage>
        <taxon>Bacteria</taxon>
        <taxon>Bacillati</taxon>
        <taxon>Cyanobacteriota</taxon>
        <taxon>Cyanophyceae</taxon>
        <taxon>Synechococcales</taxon>
        <taxon>Merismopediaceae</taxon>
        <taxon>Synechocystis</taxon>
    </lineage>
</organism>
<gene>
    <name type="primary">cmpB</name>
    <name type="ordered locus">slr0041</name>
</gene>